<organism>
    <name type="scientific">Neisseria meningitidis serogroup B (strain ATCC BAA-335 / MC58)</name>
    <dbReference type="NCBI Taxonomy" id="122586"/>
    <lineage>
        <taxon>Bacteria</taxon>
        <taxon>Pseudomonadati</taxon>
        <taxon>Pseudomonadota</taxon>
        <taxon>Betaproteobacteria</taxon>
        <taxon>Neisseriales</taxon>
        <taxon>Neisseriaceae</taxon>
        <taxon>Neisseria</taxon>
    </lineage>
</organism>
<name>DSBD_NEIMB</name>
<evidence type="ECO:0000250" key="1"/>
<evidence type="ECO:0000255" key="2"/>
<evidence type="ECO:0000256" key="3">
    <source>
        <dbReference type="SAM" id="MobiDB-lite"/>
    </source>
</evidence>
<evidence type="ECO:0000305" key="4"/>
<evidence type="ECO:0007829" key="5">
    <source>
        <dbReference type="PDB" id="2K0R"/>
    </source>
</evidence>
<evidence type="ECO:0007829" key="6">
    <source>
        <dbReference type="PDB" id="6DNL"/>
    </source>
</evidence>
<accession>Q9JYM0</accession>
<reference key="1">
    <citation type="journal article" date="2000" name="Science">
        <title>Complete genome sequence of Neisseria meningitidis serogroup B strain MC58.</title>
        <authorList>
            <person name="Tettelin H."/>
            <person name="Saunders N.J."/>
            <person name="Heidelberg J.F."/>
            <person name="Jeffries A.C."/>
            <person name="Nelson K.E."/>
            <person name="Eisen J.A."/>
            <person name="Ketchum K.A."/>
            <person name="Hood D.W."/>
            <person name="Peden J.F."/>
            <person name="Dodson R.J."/>
            <person name="Nelson W.C."/>
            <person name="Gwinn M.L."/>
            <person name="DeBoy R.T."/>
            <person name="Peterson J.D."/>
            <person name="Hickey E.K."/>
            <person name="Haft D.H."/>
            <person name="Salzberg S.L."/>
            <person name="White O."/>
            <person name="Fleischmann R.D."/>
            <person name="Dougherty B.A."/>
            <person name="Mason T.M."/>
            <person name="Ciecko A."/>
            <person name="Parksey D.S."/>
            <person name="Blair E."/>
            <person name="Cittone H."/>
            <person name="Clark E.B."/>
            <person name="Cotton M.D."/>
            <person name="Utterback T.R."/>
            <person name="Khouri H.M."/>
            <person name="Qin H."/>
            <person name="Vamathevan J.J."/>
            <person name="Gill J."/>
            <person name="Scarlato V."/>
            <person name="Masignani V."/>
            <person name="Pizza M."/>
            <person name="Grandi G."/>
            <person name="Sun L."/>
            <person name="Smith H.O."/>
            <person name="Fraser C.M."/>
            <person name="Moxon E.R."/>
            <person name="Rappuoli R."/>
            <person name="Venter J.C."/>
        </authorList>
    </citation>
    <scope>NUCLEOTIDE SEQUENCE [LARGE SCALE GENOMIC DNA]</scope>
    <source>
        <strain>ATCC BAA-335 / MC58</strain>
    </source>
</reference>
<protein>
    <recommendedName>
        <fullName>Thiol:disulfide interchange protein DsbD</fullName>
        <ecNumber>1.8.1.8</ecNumber>
    </recommendedName>
    <alternativeName>
        <fullName>Protein-disulfide reductase</fullName>
        <shortName>Disulfide reductase</shortName>
    </alternativeName>
</protein>
<comment type="function">
    <text evidence="1">Required to facilitate the formation of correct disulfide bonds in some periplasmic proteins and for the assembly of the periplasmic c-type cytochromes. Acts by transferring electrons from cytoplasmic thioredoxin to the periplasm. This transfer involves a cascade of disulfide bond formation and reduction steps (By similarity).</text>
</comment>
<comment type="catalytic activity">
    <reaction>
        <text>[protein]-dithiol + NAD(+) = [protein]-disulfide + NADH + H(+)</text>
        <dbReference type="Rhea" id="RHEA:18749"/>
        <dbReference type="Rhea" id="RHEA-COMP:10593"/>
        <dbReference type="Rhea" id="RHEA-COMP:10594"/>
        <dbReference type="ChEBI" id="CHEBI:15378"/>
        <dbReference type="ChEBI" id="CHEBI:29950"/>
        <dbReference type="ChEBI" id="CHEBI:50058"/>
        <dbReference type="ChEBI" id="CHEBI:57540"/>
        <dbReference type="ChEBI" id="CHEBI:57945"/>
        <dbReference type="EC" id="1.8.1.8"/>
    </reaction>
</comment>
<comment type="catalytic activity">
    <reaction>
        <text>[protein]-dithiol + NADP(+) = [protein]-disulfide + NADPH + H(+)</text>
        <dbReference type="Rhea" id="RHEA:18753"/>
        <dbReference type="Rhea" id="RHEA-COMP:10593"/>
        <dbReference type="Rhea" id="RHEA-COMP:10594"/>
        <dbReference type="ChEBI" id="CHEBI:15378"/>
        <dbReference type="ChEBI" id="CHEBI:29950"/>
        <dbReference type="ChEBI" id="CHEBI:50058"/>
        <dbReference type="ChEBI" id="CHEBI:57783"/>
        <dbReference type="ChEBI" id="CHEBI:58349"/>
        <dbReference type="EC" id="1.8.1.8"/>
    </reaction>
</comment>
<comment type="subcellular location">
    <subcellularLocation>
        <location evidence="1">Cell inner membrane</location>
        <topology evidence="1">Multi-pass membrane protein</topology>
    </subcellularLocation>
</comment>
<comment type="similarity">
    <text evidence="4">Belongs to the thioredoxin family. DsbD subfamily.</text>
</comment>
<feature type="signal peptide" evidence="2">
    <location>
        <begin position="1"/>
        <end position="20"/>
    </location>
</feature>
<feature type="chain" id="PRO_0000007378" description="Thiol:disulfide interchange protein DsbD">
    <location>
        <begin position="21"/>
        <end position="601"/>
    </location>
</feature>
<feature type="topological domain" description="Periplasmic" evidence="2">
    <location>
        <begin position="21"/>
        <end position="191"/>
    </location>
</feature>
<feature type="transmembrane region" description="Helical" evidence="2">
    <location>
        <begin position="192"/>
        <end position="212"/>
    </location>
</feature>
<feature type="topological domain" description="Cytoplasmic" evidence="2">
    <location>
        <begin position="213"/>
        <end position="242"/>
    </location>
</feature>
<feature type="transmembrane region" description="Helical" evidence="2">
    <location>
        <begin position="243"/>
        <end position="263"/>
    </location>
</feature>
<feature type="topological domain" description="Periplasmic" evidence="2">
    <location>
        <begin position="264"/>
        <end position="266"/>
    </location>
</feature>
<feature type="transmembrane region" description="Helical" evidence="2">
    <location>
        <begin position="267"/>
        <end position="287"/>
    </location>
</feature>
<feature type="topological domain" description="Cytoplasmic" evidence="2">
    <location>
        <begin position="288"/>
        <end position="310"/>
    </location>
</feature>
<feature type="transmembrane region" description="Helical" evidence="2">
    <location>
        <begin position="311"/>
        <end position="331"/>
    </location>
</feature>
<feature type="topological domain" description="Periplasmic" evidence="2">
    <location>
        <begin position="332"/>
        <end position="346"/>
    </location>
</feature>
<feature type="transmembrane region" description="Helical" evidence="2">
    <location>
        <begin position="347"/>
        <end position="367"/>
    </location>
</feature>
<feature type="topological domain" description="Cytoplasmic" evidence="2">
    <location>
        <begin position="368"/>
        <end position="380"/>
    </location>
</feature>
<feature type="transmembrane region" description="Helical" evidence="2">
    <location>
        <begin position="381"/>
        <end position="401"/>
    </location>
</feature>
<feature type="topological domain" description="Periplasmic" evidence="2">
    <location>
        <begin position="402"/>
        <end position="406"/>
    </location>
</feature>
<feature type="transmembrane region" description="Helical" evidence="2">
    <location>
        <begin position="407"/>
        <end position="427"/>
    </location>
</feature>
<feature type="topological domain" description="Cytoplasmic" evidence="2">
    <location>
        <begin position="428"/>
        <end position="437"/>
    </location>
</feature>
<feature type="transmembrane region" description="Helical" evidence="2">
    <location>
        <begin position="438"/>
        <end position="458"/>
    </location>
</feature>
<feature type="topological domain" description="Periplasmic" evidence="2">
    <location>
        <begin position="459"/>
        <end position="601"/>
    </location>
</feature>
<feature type="domain" description="Thioredoxin">
    <location>
        <begin position="467"/>
        <end position="601"/>
    </location>
</feature>
<feature type="region of interest" description="Disordered" evidence="3">
    <location>
        <begin position="148"/>
        <end position="176"/>
    </location>
</feature>
<feature type="disulfide bond" description="Redox-active" evidence="1">
    <location>
        <begin position="120"/>
        <end position="126"/>
    </location>
</feature>
<feature type="disulfide bond" description="Redox-active" evidence="1">
    <location>
        <begin position="207"/>
        <end position="328"/>
    </location>
</feature>
<feature type="disulfide bond" description="Redox-active" evidence="1">
    <location>
        <begin position="519"/>
        <end position="522"/>
    </location>
</feature>
<feature type="helix" evidence="5">
    <location>
        <begin position="24"/>
        <end position="26"/>
    </location>
</feature>
<feature type="turn" evidence="5">
    <location>
        <begin position="29"/>
        <end position="31"/>
    </location>
</feature>
<feature type="strand" evidence="5">
    <location>
        <begin position="32"/>
        <end position="39"/>
    </location>
</feature>
<feature type="strand" evidence="5">
    <location>
        <begin position="41"/>
        <end position="50"/>
    </location>
</feature>
<feature type="strand" evidence="5">
    <location>
        <begin position="54"/>
        <end position="57"/>
    </location>
</feature>
<feature type="turn" evidence="5">
    <location>
        <begin position="58"/>
        <end position="60"/>
    </location>
</feature>
<feature type="strand" evidence="5">
    <location>
        <begin position="62"/>
        <end position="69"/>
    </location>
</feature>
<feature type="strand" evidence="5">
    <location>
        <begin position="80"/>
        <end position="83"/>
    </location>
</feature>
<feature type="strand" evidence="5">
    <location>
        <begin position="85"/>
        <end position="87"/>
    </location>
</feature>
<feature type="strand" evidence="5">
    <location>
        <begin position="89"/>
        <end position="95"/>
    </location>
</feature>
<feature type="strand" evidence="5">
    <location>
        <begin position="98"/>
        <end position="102"/>
    </location>
</feature>
<feature type="strand" evidence="5">
    <location>
        <begin position="111"/>
        <end position="117"/>
    </location>
</feature>
<feature type="strand" evidence="5">
    <location>
        <begin position="119"/>
        <end position="121"/>
    </location>
</feature>
<feature type="turn" evidence="5">
    <location>
        <begin position="122"/>
        <end position="124"/>
    </location>
</feature>
<feature type="strand" evidence="5">
    <location>
        <begin position="130"/>
        <end position="138"/>
    </location>
</feature>
<feature type="strand" evidence="5">
    <location>
        <begin position="140"/>
        <end position="142"/>
    </location>
</feature>
<feature type="helix" evidence="6">
    <location>
        <begin position="491"/>
        <end position="504"/>
    </location>
</feature>
<feature type="strand" evidence="6">
    <location>
        <begin position="510"/>
        <end position="515"/>
    </location>
</feature>
<feature type="helix" evidence="6">
    <location>
        <begin position="520"/>
        <end position="528"/>
    </location>
</feature>
<feature type="turn" evidence="6">
    <location>
        <begin position="529"/>
        <end position="531"/>
    </location>
</feature>
<feature type="helix" evidence="6">
    <location>
        <begin position="533"/>
        <end position="539"/>
    </location>
</feature>
<feature type="helix" evidence="6">
    <location>
        <begin position="541"/>
        <end position="543"/>
    </location>
</feature>
<feature type="strand" evidence="6">
    <location>
        <begin position="544"/>
        <end position="548"/>
    </location>
</feature>
<feature type="helix" evidence="6">
    <location>
        <begin position="554"/>
        <end position="563"/>
    </location>
</feature>
<feature type="strand" evidence="6">
    <location>
        <begin position="566"/>
        <end position="568"/>
    </location>
</feature>
<feature type="strand" evidence="6">
    <location>
        <begin position="571"/>
        <end position="574"/>
    </location>
</feature>
<feature type="helix" evidence="6">
    <location>
        <begin position="590"/>
        <end position="599"/>
    </location>
</feature>
<proteinExistence type="evidence at protein level"/>
<sequence>MKKLICLFAVFLMLCGRAFALDANDLLPPEKAFVPELAVADDGVNVRFRIADGYYMYQAKIVGKTDPADLLGQPSFSKGEEKEDEFFGRQTVYHHEAQVAFPYAKAVGEPYKLVLTYQGCAEAGVCYPPVDTEFDIFGNGTYHPQTDEPASAKDRFLQPSSQNGSGALPPPKGDEGGDSRFKLSWDTLNANLLAFFLAGLGLSFTACMYPLLPIVSSIVVGDKKAGKARAFVLSVVYVQGLALTYTLVGIVAGLTGALLTVWLQQAWVVLAASALMVVLALSMFGLFNIQLPNAVQSYFQNQSSRLSGGKIVSVFIMGILSALIVGPCVAPPLAFALGYIGQTGDAVLGGLALYTLALGTGVPLIAIGTFGGHILPKAGDWMNAVKYAFGFILLAVAVYLATPHLPYYLVVALYTLLMLVPAFMLLVNGRRQKRRPKAVAFALGGILLIGGAWFGWQGANGKTTALHHFLTLNPPAEAGKSSEHGKMFADTAALKAAMDTALKEHPDKPVVLDFYADWCISCKEMAAYTLNQPEVHQAVDMERFFQIDVTANTPEHQALLKEYGLFGPPGVFVVRSDGSRSEPLLGFVKADKFIEWYEQNR</sequence>
<keyword id="KW-0002">3D-structure</keyword>
<keyword id="KW-0997">Cell inner membrane</keyword>
<keyword id="KW-1003">Cell membrane</keyword>
<keyword id="KW-0201">Cytochrome c-type biogenesis</keyword>
<keyword id="KW-1015">Disulfide bond</keyword>
<keyword id="KW-0249">Electron transport</keyword>
<keyword id="KW-0472">Membrane</keyword>
<keyword id="KW-0520">NAD</keyword>
<keyword id="KW-0560">Oxidoreductase</keyword>
<keyword id="KW-0676">Redox-active center</keyword>
<keyword id="KW-1185">Reference proteome</keyword>
<keyword id="KW-0732">Signal</keyword>
<keyword id="KW-0812">Transmembrane</keyword>
<keyword id="KW-1133">Transmembrane helix</keyword>
<keyword id="KW-0813">Transport</keyword>
<dbReference type="EC" id="1.8.1.8"/>
<dbReference type="EMBL" id="AE002098">
    <property type="protein sequence ID" value="AAF41875.1"/>
    <property type="molecule type" value="Genomic_DNA"/>
</dbReference>
<dbReference type="PIR" id="F81074">
    <property type="entry name" value="F81074"/>
</dbReference>
<dbReference type="RefSeq" id="NP_274527.1">
    <property type="nucleotide sequence ID" value="NC_003112.2"/>
</dbReference>
<dbReference type="PDB" id="2K0R">
    <property type="method" value="NMR"/>
    <property type="chains" value="A=20-146"/>
</dbReference>
<dbReference type="PDB" id="2K9F">
    <property type="method" value="NMR"/>
    <property type="chains" value="B=20-146"/>
</dbReference>
<dbReference type="PDB" id="6DNL">
    <property type="method" value="X-ray"/>
    <property type="resolution" value="1.70 A"/>
    <property type="chains" value="A=487-601"/>
</dbReference>
<dbReference type="PDBsum" id="2K0R"/>
<dbReference type="PDBsum" id="2K9F"/>
<dbReference type="PDBsum" id="6DNL"/>
<dbReference type="BMRB" id="Q9JYM0"/>
<dbReference type="SMR" id="Q9JYM0"/>
<dbReference type="FunCoup" id="Q9JYM0">
    <property type="interactions" value="84"/>
</dbReference>
<dbReference type="STRING" id="122586.NMB1519"/>
<dbReference type="PaxDb" id="122586-NMB1519"/>
<dbReference type="KEGG" id="nme:NMB1519"/>
<dbReference type="PATRIC" id="fig|122586.8.peg.1927"/>
<dbReference type="HOGENOM" id="CLU_014657_3_0_4"/>
<dbReference type="InParanoid" id="Q9JYM0"/>
<dbReference type="OrthoDB" id="9811036at2"/>
<dbReference type="EvolutionaryTrace" id="Q9JYM0"/>
<dbReference type="Proteomes" id="UP000000425">
    <property type="component" value="Chromosome"/>
</dbReference>
<dbReference type="GO" id="GO:0005886">
    <property type="term" value="C:plasma membrane"/>
    <property type="evidence" value="ECO:0007669"/>
    <property type="project" value="UniProtKB-SubCell"/>
</dbReference>
<dbReference type="GO" id="GO:0009055">
    <property type="term" value="F:electron transfer activity"/>
    <property type="evidence" value="ECO:0007669"/>
    <property type="project" value="UniProtKB-UniRule"/>
</dbReference>
<dbReference type="GO" id="GO:0047134">
    <property type="term" value="F:protein-disulfide reductase [NAD(P)H] activity"/>
    <property type="evidence" value="ECO:0007669"/>
    <property type="project" value="UniProtKB-UniRule"/>
</dbReference>
<dbReference type="GO" id="GO:0015035">
    <property type="term" value="F:protein-disulfide reductase activity"/>
    <property type="evidence" value="ECO:0000318"/>
    <property type="project" value="GO_Central"/>
</dbReference>
<dbReference type="GO" id="GO:0045454">
    <property type="term" value="P:cell redox homeostasis"/>
    <property type="evidence" value="ECO:0000318"/>
    <property type="project" value="GO_Central"/>
</dbReference>
<dbReference type="GO" id="GO:0017004">
    <property type="term" value="P:cytochrome complex assembly"/>
    <property type="evidence" value="ECO:0007669"/>
    <property type="project" value="UniProtKB-UniRule"/>
</dbReference>
<dbReference type="CDD" id="cd02953">
    <property type="entry name" value="DsbDgamma"/>
    <property type="match status" value="1"/>
</dbReference>
<dbReference type="Gene3D" id="3.40.30.10">
    <property type="entry name" value="Glutaredoxin"/>
    <property type="match status" value="1"/>
</dbReference>
<dbReference type="Gene3D" id="2.60.40.1250">
    <property type="entry name" value="Thiol:disulfide interchange protein DsbD, N-terminal domain"/>
    <property type="match status" value="1"/>
</dbReference>
<dbReference type="HAMAP" id="MF_00399">
    <property type="entry name" value="DbsD"/>
    <property type="match status" value="1"/>
</dbReference>
<dbReference type="InterPro" id="IPR003834">
    <property type="entry name" value="Cyt_c_assmbl_TM_dom"/>
</dbReference>
<dbReference type="InterPro" id="IPR035671">
    <property type="entry name" value="DsbD_gamma"/>
</dbReference>
<dbReference type="InterPro" id="IPR028250">
    <property type="entry name" value="DsbDN"/>
</dbReference>
<dbReference type="InterPro" id="IPR036929">
    <property type="entry name" value="DsbDN_sf"/>
</dbReference>
<dbReference type="InterPro" id="IPR022910">
    <property type="entry name" value="Thiol_diS_interchange_DbsD"/>
</dbReference>
<dbReference type="InterPro" id="IPR012336">
    <property type="entry name" value="Thioredoxin-like_fold"/>
</dbReference>
<dbReference type="InterPro" id="IPR036249">
    <property type="entry name" value="Thioredoxin-like_sf"/>
</dbReference>
<dbReference type="InterPro" id="IPR013766">
    <property type="entry name" value="Thioredoxin_domain"/>
</dbReference>
<dbReference type="NCBIfam" id="NF001419">
    <property type="entry name" value="PRK00293.1"/>
    <property type="match status" value="1"/>
</dbReference>
<dbReference type="PANTHER" id="PTHR32234">
    <property type="entry name" value="THIOL:DISULFIDE INTERCHANGE PROTEIN DSBD"/>
    <property type="match status" value="1"/>
</dbReference>
<dbReference type="PANTHER" id="PTHR32234:SF0">
    <property type="entry name" value="THIOL:DISULFIDE INTERCHANGE PROTEIN DSBD"/>
    <property type="match status" value="1"/>
</dbReference>
<dbReference type="Pfam" id="PF11412">
    <property type="entry name" value="DsbD_N"/>
    <property type="match status" value="1"/>
</dbReference>
<dbReference type="Pfam" id="PF02683">
    <property type="entry name" value="DsbD_TM"/>
    <property type="match status" value="1"/>
</dbReference>
<dbReference type="Pfam" id="PF13098">
    <property type="entry name" value="Thioredoxin_2"/>
    <property type="match status" value="1"/>
</dbReference>
<dbReference type="SUPFAM" id="SSF74863">
    <property type="entry name" value="Thiol:disulfide interchange protein DsbD, N-terminal domain (DsbD-alpha)"/>
    <property type="match status" value="1"/>
</dbReference>
<dbReference type="SUPFAM" id="SSF52833">
    <property type="entry name" value="Thioredoxin-like"/>
    <property type="match status" value="1"/>
</dbReference>
<dbReference type="PROSITE" id="PS51352">
    <property type="entry name" value="THIOREDOXIN_2"/>
    <property type="match status" value="1"/>
</dbReference>
<gene>
    <name type="primary">dsbD</name>
    <name type="ordered locus">NMB1519</name>
</gene>